<protein>
    <recommendedName>
        <fullName>Chitooligosaccharide deacetylase</fullName>
        <ecNumber>3.5.1.-</ecNumber>
    </recommendedName>
    <alternativeName>
        <fullName>Nodulation protein B</fullName>
    </alternativeName>
</protein>
<reference key="1">
    <citation type="journal article" date="1986" name="Nucleic Acids Res.">
        <title>Conserved nodulation genes from the non-legume symbiont Bradyrhizobium sp. (Parasponia).</title>
        <authorList>
            <person name="Scott K.F."/>
        </authorList>
    </citation>
    <scope>NUCLEOTIDE SEQUENCE [GENOMIC DNA]</scope>
</reference>
<proteinExistence type="inferred from homology"/>
<dbReference type="EC" id="3.5.1.-"/>
<dbReference type="EMBL" id="X03720">
    <property type="protein sequence ID" value="CAA27349.1"/>
    <property type="molecule type" value="Genomic_DNA"/>
</dbReference>
<dbReference type="PIR" id="B26813">
    <property type="entry name" value="B26813"/>
</dbReference>
<dbReference type="SMR" id="P04675"/>
<dbReference type="GO" id="GO:0005737">
    <property type="term" value="C:cytoplasm"/>
    <property type="evidence" value="ECO:0007669"/>
    <property type="project" value="UniProtKB-SubCell"/>
</dbReference>
<dbReference type="GO" id="GO:0016020">
    <property type="term" value="C:membrane"/>
    <property type="evidence" value="ECO:0007669"/>
    <property type="project" value="TreeGrafter"/>
</dbReference>
<dbReference type="GO" id="GO:0016810">
    <property type="term" value="F:hydrolase activity, acting on carbon-nitrogen (but not peptide) bonds"/>
    <property type="evidence" value="ECO:0007669"/>
    <property type="project" value="InterPro"/>
</dbReference>
<dbReference type="GO" id="GO:0046872">
    <property type="term" value="F:metal ion binding"/>
    <property type="evidence" value="ECO:0007669"/>
    <property type="project" value="UniProtKB-KW"/>
</dbReference>
<dbReference type="GO" id="GO:0005975">
    <property type="term" value="P:carbohydrate metabolic process"/>
    <property type="evidence" value="ECO:0007669"/>
    <property type="project" value="InterPro"/>
</dbReference>
<dbReference type="Gene3D" id="3.20.20.370">
    <property type="entry name" value="Glycoside hydrolase/deacetylase"/>
    <property type="match status" value="1"/>
</dbReference>
<dbReference type="InterPro" id="IPR011330">
    <property type="entry name" value="Glyco_hydro/deAcase_b/a-brl"/>
</dbReference>
<dbReference type="InterPro" id="IPR002509">
    <property type="entry name" value="NODB_dom"/>
</dbReference>
<dbReference type="InterPro" id="IPR026402">
    <property type="entry name" value="Nodulat_NodB"/>
</dbReference>
<dbReference type="InterPro" id="IPR050248">
    <property type="entry name" value="Polysacc_deacetylase_ArnD"/>
</dbReference>
<dbReference type="NCBIfam" id="TIGR04243">
    <property type="entry name" value="nodulat_NodB"/>
    <property type="match status" value="1"/>
</dbReference>
<dbReference type="PANTHER" id="PTHR10587:SF133">
    <property type="entry name" value="CHITIN DEACETYLASE 1-RELATED"/>
    <property type="match status" value="1"/>
</dbReference>
<dbReference type="PANTHER" id="PTHR10587">
    <property type="entry name" value="GLYCOSYL TRANSFERASE-RELATED"/>
    <property type="match status" value="1"/>
</dbReference>
<dbReference type="Pfam" id="PF01522">
    <property type="entry name" value="Polysacc_deac_1"/>
    <property type="match status" value="1"/>
</dbReference>
<dbReference type="SUPFAM" id="SSF88713">
    <property type="entry name" value="Glycoside hydrolase/deacetylase"/>
    <property type="match status" value="1"/>
</dbReference>
<dbReference type="PROSITE" id="PS51677">
    <property type="entry name" value="NODB"/>
    <property type="match status" value="1"/>
</dbReference>
<gene>
    <name type="primary">nodB</name>
</gene>
<keyword id="KW-0963">Cytoplasm</keyword>
<keyword id="KW-0378">Hydrolase</keyword>
<keyword id="KW-0479">Metal-binding</keyword>
<keyword id="KW-0536">Nodulation</keyword>
<feature type="chain" id="PRO_0000172749" description="Chitooligosaccharide deacetylase">
    <location>
        <begin position="1"/>
        <end position="219"/>
    </location>
</feature>
<feature type="domain" description="NodB homology" evidence="2">
    <location>
        <begin position="21"/>
        <end position="213"/>
    </location>
</feature>
<feature type="active site" description="Proton acceptor" evidence="1">
    <location>
        <position position="28"/>
    </location>
</feature>
<feature type="active site" description="Proton donor" evidence="1">
    <location>
        <position position="174"/>
    </location>
</feature>
<feature type="binding site" evidence="1">
    <location>
        <position position="79"/>
    </location>
    <ligand>
        <name>a divalent metal cation</name>
        <dbReference type="ChEBI" id="CHEBI:60240"/>
    </ligand>
</feature>
<feature type="binding site" evidence="1">
    <location>
        <position position="83"/>
    </location>
    <ligand>
        <name>a divalent metal cation</name>
        <dbReference type="ChEBI" id="CHEBI:60240"/>
    </ligand>
</feature>
<feature type="site" description="Raises pKa of active site His" evidence="1">
    <location>
        <position position="148"/>
    </location>
</feature>
<comment type="function">
    <text>Is involved in generating a small heat-stable compound (Nod), an acylated oligomer of N-acetylglucosamine, that stimulates mitosis in various plant protoplasts.</text>
</comment>
<comment type="subcellular location">
    <subcellularLocation>
        <location>Cytoplasm</location>
    </subcellularLocation>
</comment>
<comment type="similarity">
    <text evidence="3">Belongs to the polysaccharide deacetylase family.</text>
</comment>
<evidence type="ECO:0000250" key="1"/>
<evidence type="ECO:0000255" key="2">
    <source>
        <dbReference type="PROSITE-ProRule" id="PRU01014"/>
    </source>
</evidence>
<evidence type="ECO:0000305" key="3"/>
<sequence>MTEFIPLFAVRRNYGDVSGTRSVYLTFDDGPNPFCTPDVLDVLTQHRVPATFFVIGTYVANQPELIRRMVAEGHEVANHTMTHPDLSRCEPAEVHDEVLTASRAIRSACPQALPRHMRAPYGIWTQDVLATSAKAGLAAVHWSVDPRDWARPGVDRIVSSVLAAIRPGAIVLLHDGYPPGEERSCTDATSRDQTVRALSYLIPALQRRGFEIHPLPQLH</sequence>
<accession>P04675</accession>
<name>NODB_BRASP</name>
<organism>
    <name type="scientific">Bradyrhizobium sp. (strain ANU 289)</name>
    <dbReference type="NCBI Taxonomy" id="186901"/>
    <lineage>
        <taxon>Bacteria</taxon>
        <taxon>Pseudomonadati</taxon>
        <taxon>Pseudomonadota</taxon>
        <taxon>Alphaproteobacteria</taxon>
        <taxon>Hyphomicrobiales</taxon>
        <taxon>Nitrobacteraceae</taxon>
        <taxon>Bradyrhizobium</taxon>
    </lineage>
</organism>